<feature type="chain" id="PRO_1000051740" description="Nucleotide-binding protein BCG_0611c">
    <location>
        <begin position="1"/>
        <end position="163"/>
    </location>
</feature>
<accession>A1KG43</accession>
<proteinExistence type="inferred from homology"/>
<name>Y611_MYCBP</name>
<sequence length="163" mass="18078">MADSSFDIVSKVDRQEVDNALNQAAKELATRFDFRGTDTKIAWKGDEAVELTSSTEERVKAAVDVFKEKLIRRDISLKAFEAGEPQASGKTYKVTGALKQGISSENAKKITKLIRDAGPKNVKTQIQGDEVRVTSKKRDDLQAVIAMLKKADLDVALQFVNYR</sequence>
<evidence type="ECO:0000255" key="1">
    <source>
        <dbReference type="HAMAP-Rule" id="MF_00632"/>
    </source>
</evidence>
<dbReference type="EMBL" id="AM408590">
    <property type="protein sequence ID" value="CAL70596.1"/>
    <property type="molecule type" value="Genomic_DNA"/>
</dbReference>
<dbReference type="RefSeq" id="WP_003402987.1">
    <property type="nucleotide sequence ID" value="NC_008769.1"/>
</dbReference>
<dbReference type="SMR" id="A1KG43"/>
<dbReference type="KEGG" id="mbb:BCG_0611c"/>
<dbReference type="HOGENOM" id="CLU_099839_0_0_11"/>
<dbReference type="Proteomes" id="UP000001472">
    <property type="component" value="Chromosome"/>
</dbReference>
<dbReference type="GO" id="GO:0005829">
    <property type="term" value="C:cytosol"/>
    <property type="evidence" value="ECO:0007669"/>
    <property type="project" value="TreeGrafter"/>
</dbReference>
<dbReference type="GO" id="GO:0000166">
    <property type="term" value="F:nucleotide binding"/>
    <property type="evidence" value="ECO:0007669"/>
    <property type="project" value="TreeGrafter"/>
</dbReference>
<dbReference type="CDD" id="cd11740">
    <property type="entry name" value="YajQ_like"/>
    <property type="match status" value="1"/>
</dbReference>
<dbReference type="FunFam" id="3.30.70.860:FF:000004">
    <property type="entry name" value="UPF0234 protein AWC22_11905"/>
    <property type="match status" value="1"/>
</dbReference>
<dbReference type="FunFam" id="3.30.70.990:FF:000003">
    <property type="entry name" value="UPF0234 protein MIP_06774"/>
    <property type="match status" value="1"/>
</dbReference>
<dbReference type="Gene3D" id="3.30.70.860">
    <property type="match status" value="1"/>
</dbReference>
<dbReference type="Gene3D" id="3.30.70.990">
    <property type="entry name" value="YajQ-like, domain 2"/>
    <property type="match status" value="1"/>
</dbReference>
<dbReference type="HAMAP" id="MF_00632">
    <property type="entry name" value="YajQ"/>
    <property type="match status" value="1"/>
</dbReference>
<dbReference type="InterPro" id="IPR007551">
    <property type="entry name" value="DUF520"/>
</dbReference>
<dbReference type="InterPro" id="IPR035571">
    <property type="entry name" value="UPF0234-like_C"/>
</dbReference>
<dbReference type="InterPro" id="IPR035570">
    <property type="entry name" value="UPF0234_N"/>
</dbReference>
<dbReference type="InterPro" id="IPR036183">
    <property type="entry name" value="YajQ-like_sf"/>
</dbReference>
<dbReference type="NCBIfam" id="NF003819">
    <property type="entry name" value="PRK05412.1"/>
    <property type="match status" value="1"/>
</dbReference>
<dbReference type="PANTHER" id="PTHR30476">
    <property type="entry name" value="UPF0234 PROTEIN YAJQ"/>
    <property type="match status" value="1"/>
</dbReference>
<dbReference type="PANTHER" id="PTHR30476:SF0">
    <property type="entry name" value="UPF0234 PROTEIN YAJQ"/>
    <property type="match status" value="1"/>
</dbReference>
<dbReference type="Pfam" id="PF04461">
    <property type="entry name" value="DUF520"/>
    <property type="match status" value="1"/>
</dbReference>
<dbReference type="SUPFAM" id="SSF89963">
    <property type="entry name" value="YajQ-like"/>
    <property type="match status" value="2"/>
</dbReference>
<reference key="1">
    <citation type="journal article" date="2007" name="Proc. Natl. Acad. Sci. U.S.A.">
        <title>Genome plasticity of BCG and impact on vaccine efficacy.</title>
        <authorList>
            <person name="Brosch R."/>
            <person name="Gordon S.V."/>
            <person name="Garnier T."/>
            <person name="Eiglmeier K."/>
            <person name="Frigui W."/>
            <person name="Valenti P."/>
            <person name="Dos Santos S."/>
            <person name="Duthoy S."/>
            <person name="Lacroix C."/>
            <person name="Garcia-Pelayo C."/>
            <person name="Inwald J.K."/>
            <person name="Golby P."/>
            <person name="Garcia J.N."/>
            <person name="Hewinson R.G."/>
            <person name="Behr M.A."/>
            <person name="Quail M.A."/>
            <person name="Churcher C."/>
            <person name="Barrell B.G."/>
            <person name="Parkhill J."/>
            <person name="Cole S.T."/>
        </authorList>
    </citation>
    <scope>NUCLEOTIDE SEQUENCE [LARGE SCALE GENOMIC DNA]</scope>
    <source>
        <strain>BCG / Pasteur 1173P2</strain>
    </source>
</reference>
<protein>
    <recommendedName>
        <fullName evidence="1">Nucleotide-binding protein BCG_0611c</fullName>
    </recommendedName>
</protein>
<comment type="function">
    <text evidence="1">Nucleotide-binding protein.</text>
</comment>
<comment type="similarity">
    <text evidence="1">Belongs to the YajQ family.</text>
</comment>
<keyword id="KW-0547">Nucleotide-binding</keyword>
<gene>
    <name type="ordered locus">BCG_0611c</name>
</gene>
<organism>
    <name type="scientific">Mycobacterium bovis (strain BCG / Pasteur 1173P2)</name>
    <dbReference type="NCBI Taxonomy" id="410289"/>
    <lineage>
        <taxon>Bacteria</taxon>
        <taxon>Bacillati</taxon>
        <taxon>Actinomycetota</taxon>
        <taxon>Actinomycetes</taxon>
        <taxon>Mycobacteriales</taxon>
        <taxon>Mycobacteriaceae</taxon>
        <taxon>Mycobacterium</taxon>
        <taxon>Mycobacterium tuberculosis complex</taxon>
    </lineage>
</organism>